<reference key="1">
    <citation type="submission" date="2007-08" db="EMBL/GenBank/DDBJ databases">
        <title>Complete sequence of Roseiflexus castenholzii DSM 13941.</title>
        <authorList>
            <consortium name="US DOE Joint Genome Institute"/>
            <person name="Copeland A."/>
            <person name="Lucas S."/>
            <person name="Lapidus A."/>
            <person name="Barry K."/>
            <person name="Glavina del Rio T."/>
            <person name="Dalin E."/>
            <person name="Tice H."/>
            <person name="Pitluck S."/>
            <person name="Thompson L.S."/>
            <person name="Brettin T."/>
            <person name="Bruce D."/>
            <person name="Detter J.C."/>
            <person name="Han C."/>
            <person name="Tapia R."/>
            <person name="Schmutz J."/>
            <person name="Larimer F."/>
            <person name="Land M."/>
            <person name="Hauser L."/>
            <person name="Kyrpides N."/>
            <person name="Mikhailova N."/>
            <person name="Bryant D.A."/>
            <person name="Hanada S."/>
            <person name="Tsukatani Y."/>
            <person name="Richardson P."/>
        </authorList>
    </citation>
    <scope>NUCLEOTIDE SEQUENCE [LARGE SCALE GENOMIC DNA]</scope>
    <source>
        <strain>DSM 13941 / HLO8</strain>
    </source>
</reference>
<feature type="chain" id="PRO_1000084221" description="3-isopropylmalate dehydratase large subunit">
    <location>
        <begin position="1"/>
        <end position="472"/>
    </location>
</feature>
<feature type="binding site" evidence="1">
    <location>
        <position position="352"/>
    </location>
    <ligand>
        <name>[4Fe-4S] cluster</name>
        <dbReference type="ChEBI" id="CHEBI:49883"/>
    </ligand>
</feature>
<feature type="binding site" evidence="1">
    <location>
        <position position="412"/>
    </location>
    <ligand>
        <name>[4Fe-4S] cluster</name>
        <dbReference type="ChEBI" id="CHEBI:49883"/>
    </ligand>
</feature>
<feature type="binding site" evidence="1">
    <location>
        <position position="415"/>
    </location>
    <ligand>
        <name>[4Fe-4S] cluster</name>
        <dbReference type="ChEBI" id="CHEBI:49883"/>
    </ligand>
</feature>
<gene>
    <name evidence="1" type="primary">leuC</name>
    <name type="ordered locus">Rcas_1549</name>
</gene>
<keyword id="KW-0004">4Fe-4S</keyword>
<keyword id="KW-0028">Amino-acid biosynthesis</keyword>
<keyword id="KW-0100">Branched-chain amino acid biosynthesis</keyword>
<keyword id="KW-0408">Iron</keyword>
<keyword id="KW-0411">Iron-sulfur</keyword>
<keyword id="KW-0432">Leucine biosynthesis</keyword>
<keyword id="KW-0456">Lyase</keyword>
<keyword id="KW-0479">Metal-binding</keyword>
<keyword id="KW-1185">Reference proteome</keyword>
<dbReference type="EC" id="4.2.1.33" evidence="1"/>
<dbReference type="EMBL" id="CP000804">
    <property type="protein sequence ID" value="ABU57642.1"/>
    <property type="molecule type" value="Genomic_DNA"/>
</dbReference>
<dbReference type="RefSeq" id="WP_012120070.1">
    <property type="nucleotide sequence ID" value="NC_009767.1"/>
</dbReference>
<dbReference type="SMR" id="A7NJH2"/>
<dbReference type="STRING" id="383372.Rcas_1549"/>
<dbReference type="KEGG" id="rca:Rcas_1549"/>
<dbReference type="eggNOG" id="COG0065">
    <property type="taxonomic scope" value="Bacteria"/>
</dbReference>
<dbReference type="HOGENOM" id="CLU_006714_3_4_0"/>
<dbReference type="OrthoDB" id="9802769at2"/>
<dbReference type="UniPathway" id="UPA00048">
    <property type="reaction ID" value="UER00071"/>
</dbReference>
<dbReference type="Proteomes" id="UP000000263">
    <property type="component" value="Chromosome"/>
</dbReference>
<dbReference type="GO" id="GO:0003861">
    <property type="term" value="F:3-isopropylmalate dehydratase activity"/>
    <property type="evidence" value="ECO:0007669"/>
    <property type="project" value="UniProtKB-UniRule"/>
</dbReference>
<dbReference type="GO" id="GO:0051539">
    <property type="term" value="F:4 iron, 4 sulfur cluster binding"/>
    <property type="evidence" value="ECO:0007669"/>
    <property type="project" value="UniProtKB-KW"/>
</dbReference>
<dbReference type="GO" id="GO:0046872">
    <property type="term" value="F:metal ion binding"/>
    <property type="evidence" value="ECO:0007669"/>
    <property type="project" value="UniProtKB-KW"/>
</dbReference>
<dbReference type="GO" id="GO:0009098">
    <property type="term" value="P:L-leucine biosynthetic process"/>
    <property type="evidence" value="ECO:0007669"/>
    <property type="project" value="UniProtKB-UniRule"/>
</dbReference>
<dbReference type="CDD" id="cd01583">
    <property type="entry name" value="IPMI"/>
    <property type="match status" value="1"/>
</dbReference>
<dbReference type="Gene3D" id="3.30.499.10">
    <property type="entry name" value="Aconitase, domain 3"/>
    <property type="match status" value="2"/>
</dbReference>
<dbReference type="HAMAP" id="MF_01026">
    <property type="entry name" value="LeuC_type1"/>
    <property type="match status" value="1"/>
</dbReference>
<dbReference type="InterPro" id="IPR004430">
    <property type="entry name" value="3-IsopropMal_deHydase_lsu"/>
</dbReference>
<dbReference type="InterPro" id="IPR015931">
    <property type="entry name" value="Acnase/IPM_dHydase_lsu_aba_1/3"/>
</dbReference>
<dbReference type="InterPro" id="IPR001030">
    <property type="entry name" value="Acoase/IPM_deHydtase_lsu_aba"/>
</dbReference>
<dbReference type="InterPro" id="IPR018136">
    <property type="entry name" value="Aconitase_4Fe-4S_BS"/>
</dbReference>
<dbReference type="InterPro" id="IPR036008">
    <property type="entry name" value="Aconitase_4Fe-4S_dom"/>
</dbReference>
<dbReference type="InterPro" id="IPR050067">
    <property type="entry name" value="IPM_dehydratase_rel_enz"/>
</dbReference>
<dbReference type="InterPro" id="IPR033941">
    <property type="entry name" value="IPMI_cat"/>
</dbReference>
<dbReference type="NCBIfam" id="TIGR00170">
    <property type="entry name" value="leuC"/>
    <property type="match status" value="1"/>
</dbReference>
<dbReference type="NCBIfam" id="NF004016">
    <property type="entry name" value="PRK05478.1"/>
    <property type="match status" value="1"/>
</dbReference>
<dbReference type="NCBIfam" id="NF009116">
    <property type="entry name" value="PRK12466.1"/>
    <property type="match status" value="1"/>
</dbReference>
<dbReference type="PANTHER" id="PTHR43822:SF9">
    <property type="entry name" value="3-ISOPROPYLMALATE DEHYDRATASE"/>
    <property type="match status" value="1"/>
</dbReference>
<dbReference type="PANTHER" id="PTHR43822">
    <property type="entry name" value="HOMOACONITASE, MITOCHONDRIAL-RELATED"/>
    <property type="match status" value="1"/>
</dbReference>
<dbReference type="Pfam" id="PF00330">
    <property type="entry name" value="Aconitase"/>
    <property type="match status" value="1"/>
</dbReference>
<dbReference type="PRINTS" id="PR00415">
    <property type="entry name" value="ACONITASE"/>
</dbReference>
<dbReference type="SUPFAM" id="SSF53732">
    <property type="entry name" value="Aconitase iron-sulfur domain"/>
    <property type="match status" value="1"/>
</dbReference>
<dbReference type="PROSITE" id="PS00450">
    <property type="entry name" value="ACONITASE_1"/>
    <property type="match status" value="1"/>
</dbReference>
<dbReference type="PROSITE" id="PS01244">
    <property type="entry name" value="ACONITASE_2"/>
    <property type="match status" value="1"/>
</dbReference>
<sequence length="472" mass="50860">MPRTLFDKIWDTHIVRPQTAETPAVLYIDLHLIHEVTSPQAFTELRRRGLKVRRPDRTLATMDHSTPTTPRGPDGIIPVVDAQAAAQLRQLEQNCADFGIPLFALGSERQGIVHVIGPEQGLTQPGMTIVCGDSHTSTHGAFGALAFGIGTSEVAHVLATQCLIQNRPKTMEVRVDGRLKPGVTAKDIILAIIARYGVGAGVGHVFEYTGEAIRALSMEERMTICNMSIEGGARAGMIAPDDTTFQYIAGRPFAPKGAAWDEAVAYWRTLPTDDGAVYDRTITLDASQLTPMITYGTNPGMGIPIDGRIPTPEELPDQAARQALDKALRYMDLRPGQPLLGQKVDVVFLGSCTNSRISDLRMAASVLKGRKIAEGVRMMVVPGSQQVKKQAEAEGLDRIFREAGAEWREAGCSACLGMNDDKVPPGKYAVSTSNRNFEGRQGPGARTLLASPLTAVASAIEGVVADPRKYVG</sequence>
<accession>A7NJH2</accession>
<name>LEUC_ROSCS</name>
<comment type="function">
    <text evidence="1">Catalyzes the isomerization between 2-isopropylmalate and 3-isopropylmalate, via the formation of 2-isopropylmaleate.</text>
</comment>
<comment type="catalytic activity">
    <reaction evidence="1">
        <text>(2R,3S)-3-isopropylmalate = (2S)-2-isopropylmalate</text>
        <dbReference type="Rhea" id="RHEA:32287"/>
        <dbReference type="ChEBI" id="CHEBI:1178"/>
        <dbReference type="ChEBI" id="CHEBI:35121"/>
        <dbReference type="EC" id="4.2.1.33"/>
    </reaction>
</comment>
<comment type="cofactor">
    <cofactor evidence="1">
        <name>[4Fe-4S] cluster</name>
        <dbReference type="ChEBI" id="CHEBI:49883"/>
    </cofactor>
    <text evidence="1">Binds 1 [4Fe-4S] cluster per subunit.</text>
</comment>
<comment type="pathway">
    <text evidence="1">Amino-acid biosynthesis; L-leucine biosynthesis; L-leucine from 3-methyl-2-oxobutanoate: step 2/4.</text>
</comment>
<comment type="subunit">
    <text evidence="1">Heterodimer of LeuC and LeuD.</text>
</comment>
<comment type="similarity">
    <text evidence="1">Belongs to the aconitase/IPM isomerase family. LeuC type 1 subfamily.</text>
</comment>
<evidence type="ECO:0000255" key="1">
    <source>
        <dbReference type="HAMAP-Rule" id="MF_01026"/>
    </source>
</evidence>
<protein>
    <recommendedName>
        <fullName evidence="1">3-isopropylmalate dehydratase large subunit</fullName>
        <ecNumber evidence="1">4.2.1.33</ecNumber>
    </recommendedName>
    <alternativeName>
        <fullName evidence="1">Alpha-IPM isomerase</fullName>
        <shortName evidence="1">IPMI</shortName>
    </alternativeName>
    <alternativeName>
        <fullName evidence="1">Isopropylmalate isomerase</fullName>
    </alternativeName>
</protein>
<proteinExistence type="inferred from homology"/>
<organism>
    <name type="scientific">Roseiflexus castenholzii (strain DSM 13941 / HLO8)</name>
    <dbReference type="NCBI Taxonomy" id="383372"/>
    <lineage>
        <taxon>Bacteria</taxon>
        <taxon>Bacillati</taxon>
        <taxon>Chloroflexota</taxon>
        <taxon>Chloroflexia</taxon>
        <taxon>Chloroflexales</taxon>
        <taxon>Roseiflexineae</taxon>
        <taxon>Roseiflexaceae</taxon>
        <taxon>Roseiflexus</taxon>
    </lineage>
</organism>